<protein>
    <recommendedName>
        <fullName evidence="1">Inosine/xanthosine triphosphatase</fullName>
        <shortName evidence="1">ITPase/XTPase</shortName>
        <ecNumber evidence="1">3.6.1.73</ecNumber>
    </recommendedName>
    <alternativeName>
        <fullName evidence="1">Non-canonical purine NTP phosphatase</fullName>
    </alternativeName>
    <alternativeName>
        <fullName evidence="1">Non-standard purine NTP phosphatase</fullName>
    </alternativeName>
    <alternativeName>
        <fullName evidence="1">Nucleoside-triphosphate phosphatase</fullName>
        <shortName evidence="1">NTPase</shortName>
    </alternativeName>
</protein>
<keyword id="KW-0378">Hydrolase</keyword>
<keyword id="KW-0460">Magnesium</keyword>
<keyword id="KW-0464">Manganese</keyword>
<keyword id="KW-0479">Metal-binding</keyword>
<keyword id="KW-0546">Nucleotide metabolism</keyword>
<keyword id="KW-0547">Nucleotide-binding</keyword>
<reference key="1">
    <citation type="journal article" date="2008" name="PLoS ONE">
        <title>A recalibrated molecular clock and independent origins for the cholera pandemic clones.</title>
        <authorList>
            <person name="Feng L."/>
            <person name="Reeves P.R."/>
            <person name="Lan R."/>
            <person name="Ren Y."/>
            <person name="Gao C."/>
            <person name="Zhou Z."/>
            <person name="Ren Y."/>
            <person name="Cheng J."/>
            <person name="Wang W."/>
            <person name="Wang J."/>
            <person name="Qian W."/>
            <person name="Li D."/>
            <person name="Wang L."/>
        </authorList>
    </citation>
    <scope>NUCLEOTIDE SEQUENCE [LARGE SCALE GENOMIC DNA]</scope>
    <source>
        <strain>M66-2</strain>
    </source>
</reference>
<accession>C3LSV6</accession>
<feature type="chain" id="PRO_1000198087" description="Inosine/xanthosine triphosphatase">
    <location>
        <begin position="1"/>
        <end position="183"/>
    </location>
</feature>
<sequence length="183" mass="20562">MPPIIKRRVMRKIIIASQNPAKVNAVRSAFSTVFPDQEWEFIGVSVPSEVADQPMSDEETKQGALNRVRNAKQRHPGAEYYVGLEAGIEENKTFAWMIVESDQQRGESRSACLMLPPLVLERLRQAKELGDVMDEVFGTENIKQKGGAIGLLTRHHLTRSTVYHQALILALIPFINPEHYPSA</sequence>
<evidence type="ECO:0000255" key="1">
    <source>
        <dbReference type="HAMAP-Rule" id="MF_00648"/>
    </source>
</evidence>
<comment type="function">
    <text evidence="1">Phosphatase that hydrolyzes non-canonical purine nucleotides such as XTP and ITP to their respective diphosphate derivatives. Probably excludes non-canonical purines from DNA/RNA precursor pool, thus preventing their incorporation into DNA/RNA and avoiding chromosomal lesions.</text>
</comment>
<comment type="catalytic activity">
    <reaction evidence="1">
        <text>XTP + H2O = XDP + phosphate + H(+)</text>
        <dbReference type="Rhea" id="RHEA:28406"/>
        <dbReference type="ChEBI" id="CHEBI:15377"/>
        <dbReference type="ChEBI" id="CHEBI:15378"/>
        <dbReference type="ChEBI" id="CHEBI:43474"/>
        <dbReference type="ChEBI" id="CHEBI:59884"/>
        <dbReference type="ChEBI" id="CHEBI:61314"/>
        <dbReference type="EC" id="3.6.1.73"/>
    </reaction>
</comment>
<comment type="catalytic activity">
    <reaction evidence="1">
        <text>ITP + H2O = IDP + phosphate + H(+)</text>
        <dbReference type="Rhea" id="RHEA:28330"/>
        <dbReference type="ChEBI" id="CHEBI:15377"/>
        <dbReference type="ChEBI" id="CHEBI:15378"/>
        <dbReference type="ChEBI" id="CHEBI:43474"/>
        <dbReference type="ChEBI" id="CHEBI:58280"/>
        <dbReference type="ChEBI" id="CHEBI:61402"/>
        <dbReference type="EC" id="3.6.1.73"/>
    </reaction>
</comment>
<comment type="cofactor">
    <cofactor evidence="1">
        <name>Mg(2+)</name>
        <dbReference type="ChEBI" id="CHEBI:18420"/>
    </cofactor>
    <cofactor evidence="1">
        <name>Mn(2+)</name>
        <dbReference type="ChEBI" id="CHEBI:29035"/>
    </cofactor>
    <text evidence="1">Binds 1 divalent metal cation per subunit; can use either Mg(2+) or Mn(2+).</text>
</comment>
<comment type="subunit">
    <text evidence="1">Homodimer.</text>
</comment>
<comment type="similarity">
    <text evidence="1">Belongs to the YjjX NTPase family.</text>
</comment>
<proteinExistence type="inferred from homology"/>
<organism>
    <name type="scientific">Vibrio cholerae serotype O1 (strain M66-2)</name>
    <dbReference type="NCBI Taxonomy" id="579112"/>
    <lineage>
        <taxon>Bacteria</taxon>
        <taxon>Pseudomonadati</taxon>
        <taxon>Pseudomonadota</taxon>
        <taxon>Gammaproteobacteria</taxon>
        <taxon>Vibrionales</taxon>
        <taxon>Vibrionaceae</taxon>
        <taxon>Vibrio</taxon>
    </lineage>
</organism>
<name>NCPP_VIBCM</name>
<dbReference type="EC" id="3.6.1.73" evidence="1"/>
<dbReference type="EMBL" id="CP001233">
    <property type="protein sequence ID" value="ACP04982.1"/>
    <property type="molecule type" value="Genomic_DNA"/>
</dbReference>
<dbReference type="SMR" id="C3LSV6"/>
<dbReference type="KEGG" id="vcm:VCM66_0660"/>
<dbReference type="HOGENOM" id="CLU_087417_1_0_6"/>
<dbReference type="Proteomes" id="UP000001217">
    <property type="component" value="Chromosome I"/>
</dbReference>
<dbReference type="GO" id="GO:0103023">
    <property type="term" value="F:ITPase activity"/>
    <property type="evidence" value="ECO:0007669"/>
    <property type="project" value="UniProtKB-EC"/>
</dbReference>
<dbReference type="GO" id="GO:0046872">
    <property type="term" value="F:metal ion binding"/>
    <property type="evidence" value="ECO:0007669"/>
    <property type="project" value="UniProtKB-KW"/>
</dbReference>
<dbReference type="GO" id="GO:0000166">
    <property type="term" value="F:nucleotide binding"/>
    <property type="evidence" value="ECO:0007669"/>
    <property type="project" value="UniProtKB-KW"/>
</dbReference>
<dbReference type="GO" id="GO:0017111">
    <property type="term" value="F:ribonucleoside triphosphate phosphatase activity"/>
    <property type="evidence" value="ECO:0000250"/>
    <property type="project" value="UniProtKB"/>
</dbReference>
<dbReference type="GO" id="GO:0009117">
    <property type="term" value="P:nucleotide metabolic process"/>
    <property type="evidence" value="ECO:0007669"/>
    <property type="project" value="UniProtKB-KW"/>
</dbReference>
<dbReference type="GO" id="GO:0006772">
    <property type="term" value="P:thiamine metabolic process"/>
    <property type="evidence" value="ECO:0007669"/>
    <property type="project" value="TreeGrafter"/>
</dbReference>
<dbReference type="FunFam" id="3.90.950.10:FF:000002">
    <property type="entry name" value="Inosine/xanthosine triphosphatase"/>
    <property type="match status" value="1"/>
</dbReference>
<dbReference type="Gene3D" id="3.90.950.10">
    <property type="match status" value="1"/>
</dbReference>
<dbReference type="HAMAP" id="MF_00648">
    <property type="entry name" value="Non_canon_purine_NTPase_YjjX"/>
    <property type="match status" value="1"/>
</dbReference>
<dbReference type="InterPro" id="IPR029001">
    <property type="entry name" value="ITPase-like_fam"/>
</dbReference>
<dbReference type="InterPro" id="IPR002786">
    <property type="entry name" value="Non_canon_purine_NTPase"/>
</dbReference>
<dbReference type="InterPro" id="IPR026533">
    <property type="entry name" value="NTPase/PRRC1"/>
</dbReference>
<dbReference type="InterPro" id="IPR050299">
    <property type="entry name" value="YjjX_NTPase"/>
</dbReference>
<dbReference type="NCBIfam" id="TIGR00258">
    <property type="entry name" value="inosine/xanthosine triphosphatase"/>
    <property type="match status" value="1"/>
</dbReference>
<dbReference type="NCBIfam" id="NF003459">
    <property type="entry name" value="PRK05074.1"/>
    <property type="match status" value="1"/>
</dbReference>
<dbReference type="PANTHER" id="PTHR34699">
    <property type="match status" value="1"/>
</dbReference>
<dbReference type="PANTHER" id="PTHR34699:SF2">
    <property type="entry name" value="NON-CANONICAL PURINE NTP PHOSPHATASE_PRRC1 DOMAIN-CONTAINING PROTEIN"/>
    <property type="match status" value="1"/>
</dbReference>
<dbReference type="Pfam" id="PF01931">
    <property type="entry name" value="NTPase_I-T"/>
    <property type="match status" value="1"/>
</dbReference>
<dbReference type="SUPFAM" id="SSF52972">
    <property type="entry name" value="ITPase-like"/>
    <property type="match status" value="1"/>
</dbReference>
<gene>
    <name type="ordered locus">VCM66_0660</name>
</gene>